<sequence>MRVVIAQCSVDYVGRLDAHLPMADRLILIKADGSVSIHADDRAYKPLNWMTPPCTFEESAIEDIDGEDTGEKLWLVENPKGEQLRITIAQIHQEIDMDLGEDPGLVKDGVEAHLQELLAEHIETLGEKYSLVRREYPTAIGPVDIMAKNSKNEFVAVEVKRRGGIDGVEQLTRYLELLNRDDLLAPVHGVFAAQEIKPQARTLAEDRGIRCVVLDYQELRGIESNELRLF</sequence>
<accession>C3PFR8</accession>
<protein>
    <recommendedName>
        <fullName evidence="1">Endonuclease NucS</fullName>
        <ecNumber evidence="1">3.1.-.-</ecNumber>
    </recommendedName>
</protein>
<comment type="function">
    <text evidence="1">Cleaves both 3' and 5' ssDNA extremities of branched DNA structures.</text>
</comment>
<comment type="subcellular location">
    <subcellularLocation>
        <location evidence="1">Cytoplasm</location>
    </subcellularLocation>
</comment>
<comment type="similarity">
    <text evidence="1">Belongs to the NucS endonuclease family.</text>
</comment>
<reference key="1">
    <citation type="journal article" date="2010" name="BMC Genomics">
        <title>Complete genome sequence and lifestyle of black-pigmented Corynebacterium aurimucosum ATCC 700975 (formerly C. nigricans CN-1) isolated from a vaginal swab of a woman with spontaneous abortion.</title>
        <authorList>
            <person name="Trost E."/>
            <person name="Gotker S."/>
            <person name="Schneider J."/>
            <person name="Schneiker-Bekel S."/>
            <person name="Szczepanowski R."/>
            <person name="Tilker A."/>
            <person name="Viehoever P."/>
            <person name="Arnold W."/>
            <person name="Bekel T."/>
            <person name="Blom J."/>
            <person name="Gartemann K.H."/>
            <person name="Linke B."/>
            <person name="Goesmann A."/>
            <person name="Puhler A."/>
            <person name="Shukla S.K."/>
            <person name="Tauch A."/>
        </authorList>
    </citation>
    <scope>NUCLEOTIDE SEQUENCE [LARGE SCALE GENOMIC DNA]</scope>
    <source>
        <strain>ATCC 700975 / DSM 44827 / CIP 107346 / CN-1</strain>
    </source>
</reference>
<evidence type="ECO:0000255" key="1">
    <source>
        <dbReference type="HAMAP-Rule" id="MF_00722"/>
    </source>
</evidence>
<gene>
    <name evidence="1" type="primary">nucS</name>
    <name type="ordered locus">cauri_1077</name>
</gene>
<organism>
    <name type="scientific">Corynebacterium aurimucosum (strain ATCC 700975 / DSM 44827 / CIP 107346 / CN-1)</name>
    <name type="common">Corynebacterium nigricans</name>
    <dbReference type="NCBI Taxonomy" id="548476"/>
    <lineage>
        <taxon>Bacteria</taxon>
        <taxon>Bacillati</taxon>
        <taxon>Actinomycetota</taxon>
        <taxon>Actinomycetes</taxon>
        <taxon>Mycobacteriales</taxon>
        <taxon>Corynebacteriaceae</taxon>
        <taxon>Corynebacterium</taxon>
    </lineage>
</organism>
<dbReference type="EC" id="3.1.-.-" evidence="1"/>
<dbReference type="EMBL" id="CP001601">
    <property type="protein sequence ID" value="ACP32672.1"/>
    <property type="molecule type" value="Genomic_DNA"/>
</dbReference>
<dbReference type="RefSeq" id="WP_010187052.1">
    <property type="nucleotide sequence ID" value="NC_012590.1"/>
</dbReference>
<dbReference type="SMR" id="C3PFR8"/>
<dbReference type="STRING" id="548476.cauri_1077"/>
<dbReference type="GeneID" id="31923699"/>
<dbReference type="KEGG" id="car:cauri_1077"/>
<dbReference type="eggNOG" id="COG1637">
    <property type="taxonomic scope" value="Bacteria"/>
</dbReference>
<dbReference type="HOGENOM" id="CLU_069350_0_0_11"/>
<dbReference type="OrthoDB" id="3344925at2"/>
<dbReference type="Proteomes" id="UP000002077">
    <property type="component" value="Chromosome"/>
</dbReference>
<dbReference type="GO" id="GO:0005737">
    <property type="term" value="C:cytoplasm"/>
    <property type="evidence" value="ECO:0007669"/>
    <property type="project" value="UniProtKB-SubCell"/>
</dbReference>
<dbReference type="GO" id="GO:0003677">
    <property type="term" value="F:DNA binding"/>
    <property type="evidence" value="ECO:0007669"/>
    <property type="project" value="UniProtKB-KW"/>
</dbReference>
<dbReference type="GO" id="GO:0000014">
    <property type="term" value="F:single-stranded DNA endodeoxyribonuclease activity"/>
    <property type="evidence" value="ECO:0007669"/>
    <property type="project" value="UniProtKB-UniRule"/>
</dbReference>
<dbReference type="CDD" id="cd22341">
    <property type="entry name" value="NucS-like"/>
    <property type="match status" value="1"/>
</dbReference>
<dbReference type="Gene3D" id="2.70.180.20">
    <property type="match status" value="1"/>
</dbReference>
<dbReference type="Gene3D" id="3.40.1350.10">
    <property type="match status" value="1"/>
</dbReference>
<dbReference type="HAMAP" id="MF_00722">
    <property type="entry name" value="NucS"/>
    <property type="match status" value="1"/>
</dbReference>
<dbReference type="InterPro" id="IPR002793">
    <property type="entry name" value="Endonuclease_NucS"/>
</dbReference>
<dbReference type="InterPro" id="IPR048301">
    <property type="entry name" value="NucS_C"/>
</dbReference>
<dbReference type="InterPro" id="IPR048302">
    <property type="entry name" value="NucS_N"/>
</dbReference>
<dbReference type="InterPro" id="IPR049173">
    <property type="entry name" value="NucS_N_sf"/>
</dbReference>
<dbReference type="InterPro" id="IPR011335">
    <property type="entry name" value="Restrct_endonuc-II-like"/>
</dbReference>
<dbReference type="InterPro" id="IPR011856">
    <property type="entry name" value="tRNA_endonuc-like_dom_sf"/>
</dbReference>
<dbReference type="NCBIfam" id="NF002876">
    <property type="entry name" value="PRK03298.1"/>
    <property type="match status" value="1"/>
</dbReference>
<dbReference type="PANTHER" id="PTHR38814">
    <property type="entry name" value="ENDONUCLEASE NUCS"/>
    <property type="match status" value="1"/>
</dbReference>
<dbReference type="PANTHER" id="PTHR38814:SF1">
    <property type="entry name" value="ENDONUCLEASE NUCS"/>
    <property type="match status" value="1"/>
</dbReference>
<dbReference type="Pfam" id="PF01939">
    <property type="entry name" value="NucS_C"/>
    <property type="match status" value="1"/>
</dbReference>
<dbReference type="Pfam" id="PF21003">
    <property type="entry name" value="NucS_N"/>
    <property type="match status" value="1"/>
</dbReference>
<dbReference type="SUPFAM" id="SSF52980">
    <property type="entry name" value="Restriction endonuclease-like"/>
    <property type="match status" value="1"/>
</dbReference>
<keyword id="KW-0963">Cytoplasm</keyword>
<keyword id="KW-0238">DNA-binding</keyword>
<keyword id="KW-0255">Endonuclease</keyword>
<keyword id="KW-0378">Hydrolase</keyword>
<keyword id="KW-0540">Nuclease</keyword>
<keyword id="KW-1185">Reference proteome</keyword>
<feature type="chain" id="PRO_1000198197" description="Endonuclease NucS">
    <location>
        <begin position="1"/>
        <end position="230"/>
    </location>
</feature>
<proteinExistence type="inferred from homology"/>
<name>NUCS_CORA7</name>